<reference key="1">
    <citation type="submission" date="2008-08" db="EMBL/GenBank/DDBJ databases">
        <title>Characterization of full-length sequenced inserts (FLIcs) from a salmo salar white muscle specific cDNA library.</title>
        <authorList>
            <person name="Andreassen R."/>
            <person name="Hoyheim B."/>
        </authorList>
    </citation>
    <scope>NUCLEOTIDE SEQUENCE [LARGE SCALE MRNA]</scope>
    <source>
        <tissue>White muscle</tissue>
    </source>
</reference>
<reference key="2">
    <citation type="journal article" date="2010" name="BMC Genomics">
        <title>Salmo salar and Esox lucius full-length cDNA sequences reveal changes in evolutionary pressures on a post-tetraploidization genome.</title>
        <authorList>
            <person name="Leong J.S."/>
            <person name="Jantzen S.G."/>
            <person name="von Schalburg K.R."/>
            <person name="Cooper G.A."/>
            <person name="Messmer A.M."/>
            <person name="Liao N.Y."/>
            <person name="Munro S."/>
            <person name="Moore R."/>
            <person name="Holt R.A."/>
            <person name="Jones S.J."/>
            <person name="Davidson W.S."/>
            <person name="Koop B.F."/>
        </authorList>
    </citation>
    <scope>NUCLEOTIDE SEQUENCE [LARGE SCALE MRNA]</scope>
    <source>
        <tissue>Brain</tissue>
        <tissue>Head kidney</tissue>
        <tissue>Spleen</tissue>
    </source>
</reference>
<feature type="initiator methionine" description="Removed" evidence="1">
    <location>
        <position position="1"/>
    </location>
</feature>
<feature type="chain" id="PRO_0000389203" description="Small ribosomal subunit protein uS2">
    <location>
        <begin position="2"/>
        <end position="317"/>
    </location>
</feature>
<feature type="repeat" description="[DE]-W-[ST] 1">
    <location>
        <begin position="230"/>
        <end position="232"/>
    </location>
</feature>
<feature type="repeat" description="[DE]-W-[ST] 2">
    <location>
        <begin position="245"/>
        <end position="247"/>
    </location>
</feature>
<feature type="repeat" description="[DE]-W-[ST] 3">
    <location>
        <begin position="288"/>
        <end position="290"/>
    </location>
</feature>
<feature type="repeat" description="[DE]-W-[ST] 4">
    <location>
        <begin position="297"/>
        <end position="299"/>
    </location>
</feature>
<feature type="repeat" description="[DE]-W-[ST] 5">
    <location>
        <begin position="315"/>
        <end position="317"/>
    </location>
</feature>
<feature type="region of interest" description="Laminin-binding" evidence="1">
    <location>
        <begin position="161"/>
        <end position="180"/>
    </location>
</feature>
<feature type="region of interest" description="Laminin-binding" evidence="1">
    <location>
        <begin position="205"/>
        <end position="229"/>
    </location>
</feature>
<feature type="region of interest" description="Laminin-binding" evidence="1">
    <location>
        <begin position="242"/>
        <end position="317"/>
    </location>
</feature>
<feature type="region of interest" description="Disordered" evidence="2">
    <location>
        <begin position="271"/>
        <end position="317"/>
    </location>
</feature>
<feature type="compositionally biased region" description="Low complexity" evidence="2">
    <location>
        <begin position="271"/>
        <end position="284"/>
    </location>
</feature>
<feature type="site" description="Cleavage; by ST3; site 1" evidence="1">
    <location>
        <begin position="115"/>
        <end position="116"/>
    </location>
</feature>
<feature type="site" description="Cleavage; by ST3; site 2" evidence="1">
    <location>
        <begin position="133"/>
        <end position="134"/>
    </location>
</feature>
<feature type="modified residue" description="N-acetylserine" evidence="1">
    <location>
        <position position="2"/>
    </location>
</feature>
<feature type="sequence conflict" description="In Ref. 2; ACI68848." evidence="3" ref="2">
    <original>AT</original>
    <variation>PP</variation>
    <location>
        <begin position="294"/>
        <end position="295"/>
    </location>
</feature>
<feature type="sequence conflict" description="In Ref. 2; ACI68848/ACN10151/ACN12502." evidence="3" ref="2">
    <original>S</original>
    <variation>F</variation>
    <location>
        <position position="299"/>
    </location>
</feature>
<feature type="sequence conflict" description="In Ref. 2; ACI68848." evidence="3" ref="2">
    <original>T</original>
    <variation>P</variation>
    <location>
        <position position="303"/>
    </location>
</feature>
<sequence length="317" mass="34894">MSGGLDVLQMKEEDVLKFLAAGTHLGGTNMDFQMEHYTYKRKSDGVYIINLKKTWEKLLLAARAIVAIENPADVCVISSRNTGQRAVLKFASATGATTFHGRFTPGTFTNQIQAAFREPRLLIVTDPRADHQPLTEASYVNIPTIAMCNTDSPLRYVDIAIPCNNKGHHSVGLMWWMLSREVLRMRGTISREHPWEVMPDLYFYRDPEEIEKEEQAAAEKAVGKEEFQGEWTAPTADFAQPEVADWSEGVAVPSVPIQQFPAGIEGKSFTEAAAPSKAPAAAEGFAEDWSAQPATEDWSAAPTAQATEWGGASADWS</sequence>
<protein>
    <recommendedName>
        <fullName evidence="1">Small ribosomal subunit protein uS2</fullName>
    </recommendedName>
    <alternativeName>
        <fullName evidence="1">37 kDa laminin receptor precursor</fullName>
        <shortName evidence="1">37LRP</shortName>
    </alternativeName>
    <alternativeName>
        <fullName evidence="1">37/67 kDa laminin receptor</fullName>
        <shortName evidence="1">LRP/LR</shortName>
    </alternativeName>
    <alternativeName>
        <fullName evidence="3">40S ribosomal protein SA</fullName>
    </alternativeName>
    <alternativeName>
        <fullName evidence="1">67 kDa laminin receptor</fullName>
        <shortName evidence="1">67LR</shortName>
    </alternativeName>
    <alternativeName>
        <fullName evidence="1">Laminin receptor 1</fullName>
        <shortName evidence="1">LamR</shortName>
    </alternativeName>
    <alternativeName>
        <fullName evidence="1">Laminin-binding protein precursor p40</fullName>
        <shortName evidence="1">LBP/p40</shortName>
    </alternativeName>
</protein>
<organism>
    <name type="scientific">Salmo salar</name>
    <name type="common">Atlantic salmon</name>
    <dbReference type="NCBI Taxonomy" id="8030"/>
    <lineage>
        <taxon>Eukaryota</taxon>
        <taxon>Metazoa</taxon>
        <taxon>Chordata</taxon>
        <taxon>Craniata</taxon>
        <taxon>Vertebrata</taxon>
        <taxon>Euteleostomi</taxon>
        <taxon>Actinopterygii</taxon>
        <taxon>Neopterygii</taxon>
        <taxon>Teleostei</taxon>
        <taxon>Protacanthopterygii</taxon>
        <taxon>Salmoniformes</taxon>
        <taxon>Salmonidae</taxon>
        <taxon>Salmoninae</taxon>
        <taxon>Salmo</taxon>
    </lineage>
</organism>
<dbReference type="EMBL" id="BT043675">
    <property type="protein sequence ID" value="ACH70790.1"/>
    <property type="molecule type" value="mRNA"/>
</dbReference>
<dbReference type="EMBL" id="BT047565">
    <property type="protein sequence ID" value="ACI67366.1"/>
    <property type="molecule type" value="mRNA"/>
</dbReference>
<dbReference type="EMBL" id="BT049047">
    <property type="protein sequence ID" value="ACI68848.1"/>
    <property type="molecule type" value="mRNA"/>
</dbReference>
<dbReference type="EMBL" id="BT049150">
    <property type="protein sequence ID" value="ACI68951.1"/>
    <property type="molecule type" value="mRNA"/>
</dbReference>
<dbReference type="EMBL" id="BT050357">
    <property type="protein sequence ID" value="ACI70158.1"/>
    <property type="molecule type" value="mRNA"/>
</dbReference>
<dbReference type="EMBL" id="BT058438">
    <property type="protein sequence ID" value="ACN10151.1"/>
    <property type="molecule type" value="mRNA"/>
</dbReference>
<dbReference type="EMBL" id="BT060142">
    <property type="protein sequence ID" value="ACN12502.1"/>
    <property type="molecule type" value="mRNA"/>
</dbReference>
<dbReference type="RefSeq" id="NP_001134397.1">
    <property type="nucleotide sequence ID" value="NM_001140925.2"/>
</dbReference>
<dbReference type="SMR" id="B5DGB6"/>
<dbReference type="STRING" id="8030.ENSSSAP00000082269"/>
<dbReference type="PaxDb" id="8030-ENSSSAP00000082269"/>
<dbReference type="Ensembl" id="ENSSSAT00070040332">
    <property type="protein sequence ID" value="ENSSSAP00070038540"/>
    <property type="gene ID" value="ENSSSAG00070025219"/>
</dbReference>
<dbReference type="Ensembl" id="ENSSSAT00070064589">
    <property type="protein sequence ID" value="ENSSSAP00070061926"/>
    <property type="gene ID" value="ENSSSAG00070040109"/>
</dbReference>
<dbReference type="GeneID" id="100195896"/>
<dbReference type="GeneID" id="106586974"/>
<dbReference type="KEGG" id="sasa:100195896"/>
<dbReference type="KEGG" id="sasa:106586974"/>
<dbReference type="CTD" id="100195896"/>
<dbReference type="OrthoDB" id="408623at7898"/>
<dbReference type="Proteomes" id="UP000087266">
    <property type="component" value="Chromosome ssa02"/>
</dbReference>
<dbReference type="Proteomes" id="UP000087266">
    <property type="component" value="Chromosome ssa12"/>
</dbReference>
<dbReference type="Bgee" id="ENSSSAG00000067773">
    <property type="expression patterns" value="Expressed in sexually immature organism and 23 other cell types or tissues"/>
</dbReference>
<dbReference type="GO" id="GO:0022627">
    <property type="term" value="C:cytosolic small ribosomal subunit"/>
    <property type="evidence" value="ECO:0007669"/>
    <property type="project" value="UniProtKB-UniRule"/>
</dbReference>
<dbReference type="GO" id="GO:0005634">
    <property type="term" value="C:nucleus"/>
    <property type="evidence" value="ECO:0007669"/>
    <property type="project" value="UniProtKB-SubCell"/>
</dbReference>
<dbReference type="GO" id="GO:0005886">
    <property type="term" value="C:plasma membrane"/>
    <property type="evidence" value="ECO:0007669"/>
    <property type="project" value="UniProtKB-SubCell"/>
</dbReference>
<dbReference type="GO" id="GO:0043236">
    <property type="term" value="F:laminin binding"/>
    <property type="evidence" value="ECO:0007669"/>
    <property type="project" value="UniProtKB-UniRule"/>
</dbReference>
<dbReference type="GO" id="GO:0005055">
    <property type="term" value="F:laminin receptor activity"/>
    <property type="evidence" value="ECO:0007669"/>
    <property type="project" value="UniProtKB-UniRule"/>
</dbReference>
<dbReference type="GO" id="GO:0003735">
    <property type="term" value="F:structural constituent of ribosome"/>
    <property type="evidence" value="ECO:0007669"/>
    <property type="project" value="UniProtKB-UniRule"/>
</dbReference>
<dbReference type="GO" id="GO:0000028">
    <property type="term" value="P:ribosomal small subunit assembly"/>
    <property type="evidence" value="ECO:0007669"/>
    <property type="project" value="UniProtKB-UniRule"/>
</dbReference>
<dbReference type="GO" id="GO:0006412">
    <property type="term" value="P:translation"/>
    <property type="evidence" value="ECO:0007669"/>
    <property type="project" value="UniProtKB-UniRule"/>
</dbReference>
<dbReference type="CDD" id="cd01425">
    <property type="entry name" value="RPS2"/>
    <property type="match status" value="1"/>
</dbReference>
<dbReference type="FunFam" id="3.40.50.10490:FF:000012">
    <property type="entry name" value="40S ribosomal protein SA"/>
    <property type="match status" value="1"/>
</dbReference>
<dbReference type="Gene3D" id="3.40.50.10490">
    <property type="entry name" value="Glucose-6-phosphate isomerase like protein, domain 1"/>
    <property type="match status" value="1"/>
</dbReference>
<dbReference type="HAMAP" id="MF_03015">
    <property type="entry name" value="Ribosomal_S2_euk"/>
    <property type="match status" value="1"/>
</dbReference>
<dbReference type="HAMAP" id="MF_03016">
    <property type="entry name" value="Ribosomal_S2_laminin_receptor"/>
    <property type="match status" value="1"/>
</dbReference>
<dbReference type="InterPro" id="IPR001865">
    <property type="entry name" value="Ribosomal_uS2"/>
</dbReference>
<dbReference type="InterPro" id="IPR032281">
    <property type="entry name" value="Ribosomal_uS2_C"/>
</dbReference>
<dbReference type="InterPro" id="IPR018130">
    <property type="entry name" value="Ribosomal_uS2_CS"/>
</dbReference>
<dbReference type="InterPro" id="IPR027498">
    <property type="entry name" value="Ribosomal_uS2_euk"/>
</dbReference>
<dbReference type="InterPro" id="IPR005707">
    <property type="entry name" value="Ribosomal_uS2_euk/arc"/>
</dbReference>
<dbReference type="InterPro" id="IPR023591">
    <property type="entry name" value="Ribosomal_uS2_flav_dom_sf"/>
</dbReference>
<dbReference type="InterPro" id="IPR027504">
    <property type="entry name" value="Ribosomal_uS2_vert"/>
</dbReference>
<dbReference type="NCBIfam" id="TIGR01012">
    <property type="entry name" value="uS2_euk_arch"/>
    <property type="match status" value="1"/>
</dbReference>
<dbReference type="PANTHER" id="PTHR11489">
    <property type="entry name" value="40S RIBOSOMAL PROTEIN SA"/>
    <property type="match status" value="1"/>
</dbReference>
<dbReference type="Pfam" id="PF16122">
    <property type="entry name" value="40S_SA_C"/>
    <property type="match status" value="1"/>
</dbReference>
<dbReference type="Pfam" id="PF00318">
    <property type="entry name" value="Ribosomal_S2"/>
    <property type="match status" value="2"/>
</dbReference>
<dbReference type="PRINTS" id="PR00395">
    <property type="entry name" value="RIBOSOMALS2"/>
</dbReference>
<dbReference type="SUPFAM" id="SSF52313">
    <property type="entry name" value="Ribosomal protein S2"/>
    <property type="match status" value="1"/>
</dbReference>
<dbReference type="PROSITE" id="PS00962">
    <property type="entry name" value="RIBOSOMAL_S2_1"/>
    <property type="match status" value="1"/>
</dbReference>
<dbReference type="PROSITE" id="PS00963">
    <property type="entry name" value="RIBOSOMAL_S2_2"/>
    <property type="match status" value="1"/>
</dbReference>
<keyword id="KW-0007">Acetylation</keyword>
<keyword id="KW-1003">Cell membrane</keyword>
<keyword id="KW-0963">Cytoplasm</keyword>
<keyword id="KW-0472">Membrane</keyword>
<keyword id="KW-0539">Nucleus</keyword>
<keyword id="KW-0675">Receptor</keyword>
<keyword id="KW-1185">Reference proteome</keyword>
<keyword id="KW-0677">Repeat</keyword>
<keyword id="KW-0687">Ribonucleoprotein</keyword>
<keyword id="KW-0689">Ribosomal protein</keyword>
<gene>
    <name type="primary">rpsa</name>
</gene>
<accession>B5DGB6</accession>
<accession>B5XDC8</accession>
<accession>C0H7Y2</accession>
<comment type="function">
    <text evidence="1">Required for the assembly and/or stability of the 40S ribosomal subunit. Required for the processing of the 20S rRNA-precursor to mature 18S rRNA in a late step of the maturation of 40S ribosomal subunits. Also functions as a cell surface receptor for laminin. Plays a role in cell adhesion to the basement membrane and in the consequent activation of signaling transduction pathways. May play a role in cell fate determination and tissue morphogenesis.</text>
</comment>
<comment type="subunit">
    <text evidence="1">Monomer (37LRP) and homodimer (67LR). Component of the small ribosomal subunit. Mature ribosomes consist of a small (40S) and a large (60S) subunit. The 40S subunit contains about 33 different proteins and 1 molecule of RNA (18S). The 60S subunit contains about 49 different proteins and 3 molecules of RNA (28S, 5.8S and 5S). Interacts with rps21. Interacts with several laminins including at least lamb1. Interacts with mdk.</text>
</comment>
<comment type="subcellular location">
    <subcellularLocation>
        <location evidence="1">Cell membrane</location>
    </subcellularLocation>
    <subcellularLocation>
        <location evidence="1">Cytoplasm</location>
    </subcellularLocation>
    <subcellularLocation>
        <location evidence="1">Nucleus</location>
    </subcellularLocation>
    <text evidence="1">67LR is found at the surface of the plasma membrane, with its C-terminal laminin-binding domain accessible to extracellular ligands. 37LRP is found at the cell surface, in the cytoplasm and in the nucleus.</text>
</comment>
<comment type="PTM">
    <text evidence="1">Acylated. Acylation may be a prerequisite for conversion of the monomeric 37 kDa laminin receptor precursor (37LRP) to the mature dimeric 67 kDa laminin receptor (67LR), and may provide a mechanism for membrane association.</text>
</comment>
<comment type="PTM">
    <text evidence="1">Cleaved by stromelysin-3 (ST3) at the cell surface. Cleavage by stromelysin-3 may be a mechanism to alter cell-extracellular matrix interactions.</text>
</comment>
<comment type="miscellaneous">
    <text>This protein appears to have acquired a second function as a laminin receptor specifically in the vertebrate lineage.</text>
</comment>
<comment type="similarity">
    <text evidence="1">Belongs to the universal ribosomal protein uS2 family.</text>
</comment>
<name>RSSA_SALSA</name>
<proteinExistence type="evidence at transcript level"/>
<evidence type="ECO:0000255" key="1">
    <source>
        <dbReference type="HAMAP-Rule" id="MF_03016"/>
    </source>
</evidence>
<evidence type="ECO:0000256" key="2">
    <source>
        <dbReference type="SAM" id="MobiDB-lite"/>
    </source>
</evidence>
<evidence type="ECO:0000305" key="3"/>